<evidence type="ECO:0000255" key="1">
    <source>
        <dbReference type="HAMAP-Rule" id="MF_01588"/>
    </source>
</evidence>
<organism>
    <name type="scientific">Burkholderia cenocepacia (strain ATCC BAA-245 / DSM 16553 / LMG 16656 / NCTC 13227 / J2315 / CF5610)</name>
    <name type="common">Burkholderia cepacia (strain J2315)</name>
    <dbReference type="NCBI Taxonomy" id="216591"/>
    <lineage>
        <taxon>Bacteria</taxon>
        <taxon>Pseudomonadati</taxon>
        <taxon>Pseudomonadota</taxon>
        <taxon>Betaproteobacteria</taxon>
        <taxon>Burkholderiales</taxon>
        <taxon>Burkholderiaceae</taxon>
        <taxon>Burkholderia</taxon>
        <taxon>Burkholderia cepacia complex</taxon>
    </lineage>
</organism>
<protein>
    <recommendedName>
        <fullName evidence="1">DNA ligase</fullName>
        <ecNumber evidence="1">6.5.1.2</ecNumber>
    </recommendedName>
    <alternativeName>
        <fullName evidence="1">Polydeoxyribonucleotide synthase [NAD(+)]</fullName>
    </alternativeName>
</protein>
<comment type="function">
    <text evidence="1">DNA ligase that catalyzes the formation of phosphodiester linkages between 5'-phosphoryl and 3'-hydroxyl groups in double-stranded DNA using NAD as a coenzyme and as the energy source for the reaction. It is essential for DNA replication and repair of damaged DNA.</text>
</comment>
<comment type="catalytic activity">
    <reaction evidence="1">
        <text>NAD(+) + (deoxyribonucleotide)n-3'-hydroxyl + 5'-phospho-(deoxyribonucleotide)m = (deoxyribonucleotide)n+m + AMP + beta-nicotinamide D-nucleotide.</text>
        <dbReference type="EC" id="6.5.1.2"/>
    </reaction>
</comment>
<comment type="cofactor">
    <cofactor evidence="1">
        <name>Mg(2+)</name>
        <dbReference type="ChEBI" id="CHEBI:18420"/>
    </cofactor>
    <cofactor evidence="1">
        <name>Mn(2+)</name>
        <dbReference type="ChEBI" id="CHEBI:29035"/>
    </cofactor>
</comment>
<comment type="similarity">
    <text evidence="1">Belongs to the NAD-dependent DNA ligase family. LigA subfamily.</text>
</comment>
<feature type="chain" id="PRO_0000380324" description="DNA ligase">
    <location>
        <begin position="1"/>
        <end position="691"/>
    </location>
</feature>
<feature type="domain" description="BRCT" evidence="1">
    <location>
        <begin position="610"/>
        <end position="691"/>
    </location>
</feature>
<feature type="active site" description="N6-AMP-lysine intermediate" evidence="1">
    <location>
        <position position="132"/>
    </location>
</feature>
<feature type="binding site" evidence="1">
    <location>
        <begin position="41"/>
        <end position="45"/>
    </location>
    <ligand>
        <name>NAD(+)</name>
        <dbReference type="ChEBI" id="CHEBI:57540"/>
    </ligand>
</feature>
<feature type="binding site" evidence="1">
    <location>
        <begin position="90"/>
        <end position="91"/>
    </location>
    <ligand>
        <name>NAD(+)</name>
        <dbReference type="ChEBI" id="CHEBI:57540"/>
    </ligand>
</feature>
<feature type="binding site" evidence="1">
    <location>
        <position position="130"/>
    </location>
    <ligand>
        <name>NAD(+)</name>
        <dbReference type="ChEBI" id="CHEBI:57540"/>
    </ligand>
</feature>
<feature type="binding site" evidence="1">
    <location>
        <position position="153"/>
    </location>
    <ligand>
        <name>NAD(+)</name>
        <dbReference type="ChEBI" id="CHEBI:57540"/>
    </ligand>
</feature>
<feature type="binding site" evidence="1">
    <location>
        <position position="190"/>
    </location>
    <ligand>
        <name>NAD(+)</name>
        <dbReference type="ChEBI" id="CHEBI:57540"/>
    </ligand>
</feature>
<feature type="binding site" evidence="1">
    <location>
        <position position="307"/>
    </location>
    <ligand>
        <name>NAD(+)</name>
        <dbReference type="ChEBI" id="CHEBI:57540"/>
    </ligand>
</feature>
<feature type="binding site" evidence="1">
    <location>
        <position position="331"/>
    </location>
    <ligand>
        <name>NAD(+)</name>
        <dbReference type="ChEBI" id="CHEBI:57540"/>
    </ligand>
</feature>
<feature type="binding site" evidence="1">
    <location>
        <position position="425"/>
    </location>
    <ligand>
        <name>Zn(2+)</name>
        <dbReference type="ChEBI" id="CHEBI:29105"/>
    </ligand>
</feature>
<feature type="binding site" evidence="1">
    <location>
        <position position="428"/>
    </location>
    <ligand>
        <name>Zn(2+)</name>
        <dbReference type="ChEBI" id="CHEBI:29105"/>
    </ligand>
</feature>
<feature type="binding site" evidence="1">
    <location>
        <position position="443"/>
    </location>
    <ligand>
        <name>Zn(2+)</name>
        <dbReference type="ChEBI" id="CHEBI:29105"/>
    </ligand>
</feature>
<feature type="binding site" evidence="1">
    <location>
        <position position="449"/>
    </location>
    <ligand>
        <name>Zn(2+)</name>
        <dbReference type="ChEBI" id="CHEBI:29105"/>
    </ligand>
</feature>
<dbReference type="EC" id="6.5.1.2" evidence="1"/>
<dbReference type="EMBL" id="AM747720">
    <property type="protein sequence ID" value="CAR52396.1"/>
    <property type="molecule type" value="Genomic_DNA"/>
</dbReference>
<dbReference type="RefSeq" id="WP_006484653.1">
    <property type="nucleotide sequence ID" value="NC_011000.1"/>
</dbReference>
<dbReference type="SMR" id="B4ECN6"/>
<dbReference type="KEGG" id="bcj:BCAL2096"/>
<dbReference type="eggNOG" id="COG0272">
    <property type="taxonomic scope" value="Bacteria"/>
</dbReference>
<dbReference type="HOGENOM" id="CLU_007764_2_1_4"/>
<dbReference type="BioCyc" id="BCEN216591:G1G1V-2296-MONOMER"/>
<dbReference type="Proteomes" id="UP000001035">
    <property type="component" value="Chromosome 1"/>
</dbReference>
<dbReference type="GO" id="GO:0005829">
    <property type="term" value="C:cytosol"/>
    <property type="evidence" value="ECO:0007669"/>
    <property type="project" value="TreeGrafter"/>
</dbReference>
<dbReference type="GO" id="GO:0003677">
    <property type="term" value="F:DNA binding"/>
    <property type="evidence" value="ECO:0007669"/>
    <property type="project" value="InterPro"/>
</dbReference>
<dbReference type="GO" id="GO:0003911">
    <property type="term" value="F:DNA ligase (NAD+) activity"/>
    <property type="evidence" value="ECO:0007669"/>
    <property type="project" value="UniProtKB-UniRule"/>
</dbReference>
<dbReference type="GO" id="GO:0046872">
    <property type="term" value="F:metal ion binding"/>
    <property type="evidence" value="ECO:0007669"/>
    <property type="project" value="UniProtKB-KW"/>
</dbReference>
<dbReference type="GO" id="GO:0006281">
    <property type="term" value="P:DNA repair"/>
    <property type="evidence" value="ECO:0007669"/>
    <property type="project" value="UniProtKB-KW"/>
</dbReference>
<dbReference type="GO" id="GO:0006260">
    <property type="term" value="P:DNA replication"/>
    <property type="evidence" value="ECO:0007669"/>
    <property type="project" value="UniProtKB-KW"/>
</dbReference>
<dbReference type="CDD" id="cd17748">
    <property type="entry name" value="BRCT_DNA_ligase_like"/>
    <property type="match status" value="1"/>
</dbReference>
<dbReference type="CDD" id="cd00114">
    <property type="entry name" value="LIGANc"/>
    <property type="match status" value="1"/>
</dbReference>
<dbReference type="FunFam" id="1.10.150.20:FF:000006">
    <property type="entry name" value="DNA ligase"/>
    <property type="match status" value="1"/>
</dbReference>
<dbReference type="FunFam" id="1.10.150.20:FF:000007">
    <property type="entry name" value="DNA ligase"/>
    <property type="match status" value="1"/>
</dbReference>
<dbReference type="FunFam" id="1.10.287.610:FF:000002">
    <property type="entry name" value="DNA ligase"/>
    <property type="match status" value="1"/>
</dbReference>
<dbReference type="FunFam" id="2.40.50.140:FF:000012">
    <property type="entry name" value="DNA ligase"/>
    <property type="match status" value="1"/>
</dbReference>
<dbReference type="FunFam" id="3.30.470.30:FF:000001">
    <property type="entry name" value="DNA ligase"/>
    <property type="match status" value="1"/>
</dbReference>
<dbReference type="FunFam" id="3.40.50.10190:FF:000054">
    <property type="entry name" value="DNA ligase"/>
    <property type="match status" value="1"/>
</dbReference>
<dbReference type="Gene3D" id="6.20.10.30">
    <property type="match status" value="1"/>
</dbReference>
<dbReference type="Gene3D" id="1.10.150.20">
    <property type="entry name" value="5' to 3' exonuclease, C-terminal subdomain"/>
    <property type="match status" value="2"/>
</dbReference>
<dbReference type="Gene3D" id="3.40.50.10190">
    <property type="entry name" value="BRCT domain"/>
    <property type="match status" value="1"/>
</dbReference>
<dbReference type="Gene3D" id="3.30.470.30">
    <property type="entry name" value="DNA ligase/mRNA capping enzyme"/>
    <property type="match status" value="1"/>
</dbReference>
<dbReference type="Gene3D" id="1.10.287.610">
    <property type="entry name" value="Helix hairpin bin"/>
    <property type="match status" value="1"/>
</dbReference>
<dbReference type="Gene3D" id="2.40.50.140">
    <property type="entry name" value="Nucleic acid-binding proteins"/>
    <property type="match status" value="1"/>
</dbReference>
<dbReference type="HAMAP" id="MF_01588">
    <property type="entry name" value="DNA_ligase_A"/>
    <property type="match status" value="1"/>
</dbReference>
<dbReference type="InterPro" id="IPR001357">
    <property type="entry name" value="BRCT_dom"/>
</dbReference>
<dbReference type="InterPro" id="IPR036420">
    <property type="entry name" value="BRCT_dom_sf"/>
</dbReference>
<dbReference type="InterPro" id="IPR041663">
    <property type="entry name" value="DisA/LigA_HHH"/>
</dbReference>
<dbReference type="InterPro" id="IPR001679">
    <property type="entry name" value="DNA_ligase"/>
</dbReference>
<dbReference type="InterPro" id="IPR018239">
    <property type="entry name" value="DNA_ligase_AS"/>
</dbReference>
<dbReference type="InterPro" id="IPR033136">
    <property type="entry name" value="DNA_ligase_CS"/>
</dbReference>
<dbReference type="InterPro" id="IPR013839">
    <property type="entry name" value="DNAligase_adenylation"/>
</dbReference>
<dbReference type="InterPro" id="IPR013840">
    <property type="entry name" value="DNAligase_N"/>
</dbReference>
<dbReference type="InterPro" id="IPR003583">
    <property type="entry name" value="Hlx-hairpin-Hlx_DNA-bd_motif"/>
</dbReference>
<dbReference type="InterPro" id="IPR012340">
    <property type="entry name" value="NA-bd_OB-fold"/>
</dbReference>
<dbReference type="InterPro" id="IPR004150">
    <property type="entry name" value="NAD_DNA_ligase_OB"/>
</dbReference>
<dbReference type="InterPro" id="IPR010994">
    <property type="entry name" value="RuvA_2-like"/>
</dbReference>
<dbReference type="InterPro" id="IPR004149">
    <property type="entry name" value="Znf_DNAligase_C4"/>
</dbReference>
<dbReference type="NCBIfam" id="TIGR00575">
    <property type="entry name" value="dnlj"/>
    <property type="match status" value="1"/>
</dbReference>
<dbReference type="NCBIfam" id="NF005932">
    <property type="entry name" value="PRK07956.1"/>
    <property type="match status" value="1"/>
</dbReference>
<dbReference type="PANTHER" id="PTHR23389">
    <property type="entry name" value="CHROMOSOME TRANSMISSION FIDELITY FACTOR 18"/>
    <property type="match status" value="1"/>
</dbReference>
<dbReference type="PANTHER" id="PTHR23389:SF9">
    <property type="entry name" value="DNA LIGASE"/>
    <property type="match status" value="1"/>
</dbReference>
<dbReference type="Pfam" id="PF00533">
    <property type="entry name" value="BRCT"/>
    <property type="match status" value="1"/>
</dbReference>
<dbReference type="Pfam" id="PF01653">
    <property type="entry name" value="DNA_ligase_aden"/>
    <property type="match status" value="1"/>
</dbReference>
<dbReference type="Pfam" id="PF03120">
    <property type="entry name" value="DNA_ligase_OB"/>
    <property type="match status" value="1"/>
</dbReference>
<dbReference type="Pfam" id="PF03119">
    <property type="entry name" value="DNA_ligase_ZBD"/>
    <property type="match status" value="1"/>
</dbReference>
<dbReference type="Pfam" id="PF12826">
    <property type="entry name" value="HHH_2"/>
    <property type="match status" value="1"/>
</dbReference>
<dbReference type="Pfam" id="PF14520">
    <property type="entry name" value="HHH_5"/>
    <property type="match status" value="1"/>
</dbReference>
<dbReference type="Pfam" id="PF22745">
    <property type="entry name" value="Nlig-Ia"/>
    <property type="match status" value="1"/>
</dbReference>
<dbReference type="PIRSF" id="PIRSF001604">
    <property type="entry name" value="LigA"/>
    <property type="match status" value="1"/>
</dbReference>
<dbReference type="SMART" id="SM00292">
    <property type="entry name" value="BRCT"/>
    <property type="match status" value="1"/>
</dbReference>
<dbReference type="SMART" id="SM00278">
    <property type="entry name" value="HhH1"/>
    <property type="match status" value="3"/>
</dbReference>
<dbReference type="SMART" id="SM00532">
    <property type="entry name" value="LIGANc"/>
    <property type="match status" value="1"/>
</dbReference>
<dbReference type="SUPFAM" id="SSF52113">
    <property type="entry name" value="BRCT domain"/>
    <property type="match status" value="1"/>
</dbReference>
<dbReference type="SUPFAM" id="SSF56091">
    <property type="entry name" value="DNA ligase/mRNA capping enzyme, catalytic domain"/>
    <property type="match status" value="1"/>
</dbReference>
<dbReference type="SUPFAM" id="SSF50249">
    <property type="entry name" value="Nucleic acid-binding proteins"/>
    <property type="match status" value="1"/>
</dbReference>
<dbReference type="SUPFAM" id="SSF47781">
    <property type="entry name" value="RuvA domain 2-like"/>
    <property type="match status" value="1"/>
</dbReference>
<dbReference type="PROSITE" id="PS50172">
    <property type="entry name" value="BRCT"/>
    <property type="match status" value="1"/>
</dbReference>
<dbReference type="PROSITE" id="PS01055">
    <property type="entry name" value="DNA_LIGASE_N1"/>
    <property type="match status" value="1"/>
</dbReference>
<dbReference type="PROSITE" id="PS01056">
    <property type="entry name" value="DNA_LIGASE_N2"/>
    <property type="match status" value="1"/>
</dbReference>
<gene>
    <name evidence="1" type="primary">ligA</name>
    <name type="ordered locus">BceJ2315_20580</name>
    <name type="ORF">BCAL2096</name>
</gene>
<name>DNLJ_BURCJ</name>
<keyword id="KW-0227">DNA damage</keyword>
<keyword id="KW-0234">DNA repair</keyword>
<keyword id="KW-0235">DNA replication</keyword>
<keyword id="KW-0436">Ligase</keyword>
<keyword id="KW-0460">Magnesium</keyword>
<keyword id="KW-0464">Manganese</keyword>
<keyword id="KW-0479">Metal-binding</keyword>
<keyword id="KW-0520">NAD</keyword>
<keyword id="KW-0862">Zinc</keyword>
<sequence>MARTQAEPPASQPDARAAWLRDQLERANYAYYVLDQPDLPDAEYDRLFRELQQLETDHPELVTPDSPTQRVGGEAAGGFTPVVHDAPMLSLNNGFADEDIVAFDKRVADALAKATDLAGSVTDPVEYACELKFDGLAISLRYENGVFVQAATRGDGTTGEDVTENVRTIRSIPLKLKGKHVPAVLDVRGEVLMFKRDFARLNERQRAAEQREFANPRNAAAGSLRQLDSKITAQRPLSFFAYGIGVLDGMPMPDTHTALLDWYEAFGLPVNRERAVVHGAEGLLDFFRKVGEKRESLPYDIDGVVYKVNRRDEQERLGFVSRAPRFALAHKFPAQEALTKLVAIDVQVGRTGAITPVARLEPVFVGGATVTNATLHNEDEVRRKDIRIGDTVIVRRAGDVIPEVVGALLDRRPADAAEFVMPTECPVCGSKIERLPDEAIARCTGGLFCPAQRKQALWHFAQRRALDIDGLGEKIIDQLVELNLVRTPADLFNLGFATLAELDRFAEKSAQNLLDSLEKAKHTTLARFIYGLGIRHVGESTAKDLAKHFGSLTPIMDASIEELLEVNDVGPIVAESIHQFFAEEHNRTVIEQLRAPGKVTWPEGPPAPKAPQGVLAGKTVVLTGTLPNLTRDAAKEMLEAAGAKVAGSVSKKTDYVVAGAEAGSKLAKAEELGIPVLDEDGLHQLLEGNTP</sequence>
<reference key="1">
    <citation type="journal article" date="2009" name="J. Bacteriol.">
        <title>The genome of Burkholderia cenocepacia J2315, an epidemic pathogen of cystic fibrosis patients.</title>
        <authorList>
            <person name="Holden M.T."/>
            <person name="Seth-Smith H.M."/>
            <person name="Crossman L.C."/>
            <person name="Sebaihia M."/>
            <person name="Bentley S.D."/>
            <person name="Cerdeno-Tarraga A.M."/>
            <person name="Thomson N.R."/>
            <person name="Bason N."/>
            <person name="Quail M.A."/>
            <person name="Sharp S."/>
            <person name="Cherevach I."/>
            <person name="Churcher C."/>
            <person name="Goodhead I."/>
            <person name="Hauser H."/>
            <person name="Holroyd N."/>
            <person name="Mungall K."/>
            <person name="Scott P."/>
            <person name="Walker D."/>
            <person name="White B."/>
            <person name="Rose H."/>
            <person name="Iversen P."/>
            <person name="Mil-Homens D."/>
            <person name="Rocha E.P."/>
            <person name="Fialho A.M."/>
            <person name="Baldwin A."/>
            <person name="Dowson C."/>
            <person name="Barrell B.G."/>
            <person name="Govan J.R."/>
            <person name="Vandamme P."/>
            <person name="Hart C.A."/>
            <person name="Mahenthiralingam E."/>
            <person name="Parkhill J."/>
        </authorList>
    </citation>
    <scope>NUCLEOTIDE SEQUENCE [LARGE SCALE GENOMIC DNA]</scope>
    <source>
        <strain>ATCC BAA-245 / DSM 16553 / LMG 16656 / NCTC 13227 / J2315 / CF5610</strain>
    </source>
</reference>
<proteinExistence type="inferred from homology"/>
<accession>B4ECN6</accession>